<gene>
    <name evidence="1" type="primary">glmM</name>
    <name type="ordered locus">SGR_2800</name>
</gene>
<evidence type="ECO:0000255" key="1">
    <source>
        <dbReference type="HAMAP-Rule" id="MF_01554"/>
    </source>
</evidence>
<comment type="function">
    <text evidence="1">Catalyzes the conversion of glucosamine-6-phosphate to glucosamine-1-phosphate.</text>
</comment>
<comment type="catalytic activity">
    <reaction evidence="1">
        <text>alpha-D-glucosamine 1-phosphate = D-glucosamine 6-phosphate</text>
        <dbReference type="Rhea" id="RHEA:23424"/>
        <dbReference type="ChEBI" id="CHEBI:58516"/>
        <dbReference type="ChEBI" id="CHEBI:58725"/>
        <dbReference type="EC" id="5.4.2.10"/>
    </reaction>
</comment>
<comment type="cofactor">
    <cofactor evidence="1">
        <name>Mg(2+)</name>
        <dbReference type="ChEBI" id="CHEBI:18420"/>
    </cofactor>
    <text evidence="1">Binds 1 Mg(2+) ion per subunit.</text>
</comment>
<comment type="PTM">
    <text evidence="1">Activated by phosphorylation.</text>
</comment>
<comment type="similarity">
    <text evidence="1">Belongs to the phosphohexose mutase family.</text>
</comment>
<reference key="1">
    <citation type="journal article" date="2008" name="J. Bacteriol.">
        <title>Genome sequence of the streptomycin-producing microorganism Streptomyces griseus IFO 13350.</title>
        <authorList>
            <person name="Ohnishi Y."/>
            <person name="Ishikawa J."/>
            <person name="Hara H."/>
            <person name="Suzuki H."/>
            <person name="Ikenoya M."/>
            <person name="Ikeda H."/>
            <person name="Yamashita A."/>
            <person name="Hattori M."/>
            <person name="Horinouchi S."/>
        </authorList>
    </citation>
    <scope>NUCLEOTIDE SEQUENCE [LARGE SCALE GENOMIC DNA]</scope>
    <source>
        <strain>JCM 4626 / CBS 651.72 / NBRC 13350 / KCC S-0626 / ISP 5235</strain>
    </source>
</reference>
<dbReference type="EC" id="5.4.2.10" evidence="1"/>
<dbReference type="EMBL" id="AP009493">
    <property type="protein sequence ID" value="BAG19629.1"/>
    <property type="molecule type" value="Genomic_DNA"/>
</dbReference>
<dbReference type="RefSeq" id="WP_003966930.1">
    <property type="nucleotide sequence ID" value="NC_010572.1"/>
</dbReference>
<dbReference type="SMR" id="B1W3X3"/>
<dbReference type="KEGG" id="sgr:SGR_2800"/>
<dbReference type="eggNOG" id="COG1109">
    <property type="taxonomic scope" value="Bacteria"/>
</dbReference>
<dbReference type="HOGENOM" id="CLU_016950_7_0_11"/>
<dbReference type="Proteomes" id="UP000001685">
    <property type="component" value="Chromosome"/>
</dbReference>
<dbReference type="GO" id="GO:0005829">
    <property type="term" value="C:cytosol"/>
    <property type="evidence" value="ECO:0007669"/>
    <property type="project" value="TreeGrafter"/>
</dbReference>
<dbReference type="GO" id="GO:0000287">
    <property type="term" value="F:magnesium ion binding"/>
    <property type="evidence" value="ECO:0007669"/>
    <property type="project" value="UniProtKB-UniRule"/>
</dbReference>
<dbReference type="GO" id="GO:0008966">
    <property type="term" value="F:phosphoglucosamine mutase activity"/>
    <property type="evidence" value="ECO:0007669"/>
    <property type="project" value="UniProtKB-UniRule"/>
</dbReference>
<dbReference type="GO" id="GO:0004615">
    <property type="term" value="F:phosphomannomutase activity"/>
    <property type="evidence" value="ECO:0007669"/>
    <property type="project" value="TreeGrafter"/>
</dbReference>
<dbReference type="GO" id="GO:0005975">
    <property type="term" value="P:carbohydrate metabolic process"/>
    <property type="evidence" value="ECO:0007669"/>
    <property type="project" value="InterPro"/>
</dbReference>
<dbReference type="GO" id="GO:0009252">
    <property type="term" value="P:peptidoglycan biosynthetic process"/>
    <property type="evidence" value="ECO:0007669"/>
    <property type="project" value="TreeGrafter"/>
</dbReference>
<dbReference type="GO" id="GO:0006048">
    <property type="term" value="P:UDP-N-acetylglucosamine biosynthetic process"/>
    <property type="evidence" value="ECO:0007669"/>
    <property type="project" value="TreeGrafter"/>
</dbReference>
<dbReference type="CDD" id="cd05802">
    <property type="entry name" value="GlmM"/>
    <property type="match status" value="1"/>
</dbReference>
<dbReference type="FunFam" id="3.30.310.50:FF:000001">
    <property type="entry name" value="Phosphoglucosamine mutase"/>
    <property type="match status" value="1"/>
</dbReference>
<dbReference type="FunFam" id="3.40.120.10:FF:000001">
    <property type="entry name" value="Phosphoglucosamine mutase"/>
    <property type="match status" value="1"/>
</dbReference>
<dbReference type="FunFam" id="3.40.120.10:FF:000002">
    <property type="entry name" value="Phosphoglucosamine mutase"/>
    <property type="match status" value="1"/>
</dbReference>
<dbReference type="Gene3D" id="3.40.120.10">
    <property type="entry name" value="Alpha-D-Glucose-1,6-Bisphosphate, subunit A, domain 3"/>
    <property type="match status" value="3"/>
</dbReference>
<dbReference type="Gene3D" id="3.30.310.50">
    <property type="entry name" value="Alpha-D-phosphohexomutase, C-terminal domain"/>
    <property type="match status" value="1"/>
</dbReference>
<dbReference type="HAMAP" id="MF_01554_B">
    <property type="entry name" value="GlmM_B"/>
    <property type="match status" value="1"/>
</dbReference>
<dbReference type="InterPro" id="IPR005844">
    <property type="entry name" value="A-D-PHexomutase_a/b/a-I"/>
</dbReference>
<dbReference type="InterPro" id="IPR016055">
    <property type="entry name" value="A-D-PHexomutase_a/b/a-I/II/III"/>
</dbReference>
<dbReference type="InterPro" id="IPR005845">
    <property type="entry name" value="A-D-PHexomutase_a/b/a-II"/>
</dbReference>
<dbReference type="InterPro" id="IPR005846">
    <property type="entry name" value="A-D-PHexomutase_a/b/a-III"/>
</dbReference>
<dbReference type="InterPro" id="IPR005843">
    <property type="entry name" value="A-D-PHexomutase_C"/>
</dbReference>
<dbReference type="InterPro" id="IPR036900">
    <property type="entry name" value="A-D-PHexomutase_C_sf"/>
</dbReference>
<dbReference type="InterPro" id="IPR005841">
    <property type="entry name" value="Alpha-D-phosphohexomutase_SF"/>
</dbReference>
<dbReference type="InterPro" id="IPR006352">
    <property type="entry name" value="GlmM_bact"/>
</dbReference>
<dbReference type="InterPro" id="IPR050060">
    <property type="entry name" value="Phosphoglucosamine_mutase"/>
</dbReference>
<dbReference type="NCBIfam" id="TIGR01455">
    <property type="entry name" value="glmM"/>
    <property type="match status" value="1"/>
</dbReference>
<dbReference type="PANTHER" id="PTHR42946:SF1">
    <property type="entry name" value="PHOSPHOGLUCOMUTASE (ALPHA-D-GLUCOSE-1,6-BISPHOSPHATE-DEPENDENT)"/>
    <property type="match status" value="1"/>
</dbReference>
<dbReference type="PANTHER" id="PTHR42946">
    <property type="entry name" value="PHOSPHOHEXOSE MUTASE"/>
    <property type="match status" value="1"/>
</dbReference>
<dbReference type="Pfam" id="PF02878">
    <property type="entry name" value="PGM_PMM_I"/>
    <property type="match status" value="1"/>
</dbReference>
<dbReference type="Pfam" id="PF02879">
    <property type="entry name" value="PGM_PMM_II"/>
    <property type="match status" value="1"/>
</dbReference>
<dbReference type="Pfam" id="PF02880">
    <property type="entry name" value="PGM_PMM_III"/>
    <property type="match status" value="1"/>
</dbReference>
<dbReference type="Pfam" id="PF00408">
    <property type="entry name" value="PGM_PMM_IV"/>
    <property type="match status" value="1"/>
</dbReference>
<dbReference type="PRINTS" id="PR00509">
    <property type="entry name" value="PGMPMM"/>
</dbReference>
<dbReference type="SUPFAM" id="SSF55957">
    <property type="entry name" value="Phosphoglucomutase, C-terminal domain"/>
    <property type="match status" value="1"/>
</dbReference>
<dbReference type="SUPFAM" id="SSF53738">
    <property type="entry name" value="Phosphoglucomutase, first 3 domains"/>
    <property type="match status" value="3"/>
</dbReference>
<keyword id="KW-0413">Isomerase</keyword>
<keyword id="KW-0460">Magnesium</keyword>
<keyword id="KW-0479">Metal-binding</keyword>
<keyword id="KW-0597">Phosphoprotein</keyword>
<feature type="chain" id="PRO_1000201149" description="Phosphoglucosamine mutase">
    <location>
        <begin position="1"/>
        <end position="452"/>
    </location>
</feature>
<feature type="active site" description="Phosphoserine intermediate" evidence="1">
    <location>
        <position position="104"/>
    </location>
</feature>
<feature type="binding site" description="via phosphate group" evidence="1">
    <location>
        <position position="104"/>
    </location>
    <ligand>
        <name>Mg(2+)</name>
        <dbReference type="ChEBI" id="CHEBI:18420"/>
    </ligand>
</feature>
<feature type="binding site" evidence="1">
    <location>
        <position position="246"/>
    </location>
    <ligand>
        <name>Mg(2+)</name>
        <dbReference type="ChEBI" id="CHEBI:18420"/>
    </ligand>
</feature>
<feature type="binding site" evidence="1">
    <location>
        <position position="248"/>
    </location>
    <ligand>
        <name>Mg(2+)</name>
        <dbReference type="ChEBI" id="CHEBI:18420"/>
    </ligand>
</feature>
<feature type="binding site" evidence="1">
    <location>
        <position position="250"/>
    </location>
    <ligand>
        <name>Mg(2+)</name>
        <dbReference type="ChEBI" id="CHEBI:18420"/>
    </ligand>
</feature>
<feature type="modified residue" description="Phosphoserine" evidence="1">
    <location>
        <position position="104"/>
    </location>
</feature>
<accession>B1W3X3</accession>
<organism>
    <name type="scientific">Streptomyces griseus subsp. griseus (strain JCM 4626 / CBS 651.72 / NBRC 13350 / KCC S-0626 / ISP 5235)</name>
    <dbReference type="NCBI Taxonomy" id="455632"/>
    <lineage>
        <taxon>Bacteria</taxon>
        <taxon>Bacillati</taxon>
        <taxon>Actinomycetota</taxon>
        <taxon>Actinomycetes</taxon>
        <taxon>Kitasatosporales</taxon>
        <taxon>Streptomycetaceae</taxon>
        <taxon>Streptomyces</taxon>
    </lineage>
</organism>
<protein>
    <recommendedName>
        <fullName evidence="1">Phosphoglucosamine mutase</fullName>
        <ecNumber evidence="1">5.4.2.10</ecNumber>
    </recommendedName>
</protein>
<proteinExistence type="inferred from homology"/>
<sequence length="452" mass="46795">MGRLFGTDGVRGVANADLTAELALGLSVAAAHVLAEAGTFAGHRPTAVVGRDPRASGEFLEAAVVAGLASAGVDVLRVGVLPTPAVAYLTGSLGADIGVMLSASHNAMPDNGVKFFARGGHKLADELEDRIETVYEQHRTGEPWSRPTGAGVGRVTDYTEGFDRYVAHLIGVLPNRLDGLKVVLDEAHGAAARVSPEAFARAGAEVVTIGADPDGLNINDGCGSTHLELLRAAVVEHGADLGIAHDGDADRCLAVDAAGEEVDGDQILAVLALAMRDAGQLRKDTVVGTVMSNLGFKLAMEREGIRLVQTAVGDRYVLESMKAEGFALGGEQSGHVIVLDHATTGDGTLTGLMLAARVAATGRSLAELAGVMQRLPQVLINVPDVDKTRVNTSSELATAVVEAERELGENGRVLLRQSGTEPLVRVMVEAADIEQARAVAGRLADVVKSALG</sequence>
<name>GLMM_STRGG</name>